<proteinExistence type="inferred from homology"/>
<feature type="chain" id="PRO_1000165106" description="Putative metal-dependent hydrolase BAMEG_1894">
    <location>
        <begin position="1"/>
        <end position="173"/>
    </location>
</feature>
<feature type="binding site" evidence="1">
    <location>
        <position position="65"/>
    </location>
    <ligand>
        <name>Zn(2+)</name>
        <dbReference type="ChEBI" id="CHEBI:29105"/>
    </ligand>
</feature>
<feature type="binding site" evidence="1">
    <location>
        <position position="156"/>
    </location>
    <ligand>
        <name>Zn(2+)</name>
        <dbReference type="ChEBI" id="CHEBI:29105"/>
    </ligand>
</feature>
<feature type="binding site" evidence="1">
    <location>
        <position position="160"/>
    </location>
    <ligand>
        <name>Zn(2+)</name>
        <dbReference type="ChEBI" id="CHEBI:29105"/>
    </ligand>
</feature>
<protein>
    <recommendedName>
        <fullName evidence="1">Putative metal-dependent hydrolase BAMEG_1894</fullName>
        <ecNumber evidence="1">3.-.-.-</ecNumber>
    </recommendedName>
</protein>
<accession>C3LH21</accession>
<gene>
    <name type="ordered locus">BAMEG_1894</name>
</gene>
<sequence length="173" mass="20399">MNDLRYPIGQFTYKRPITEEMIDTWIQEIEDLPNELTKAIKDLDQKQLDTPYRVGGWTVRQVVHHVVDSHMNSYIRFKLALTEKNPTIKPYKEEKWAELPDSKLPVDVSLVMLESLHKRWVNLLYSLELEDLEKTFNHPDTGETKLAAAIGLYAWHGRHHTAHITSLRKRLNW</sequence>
<keyword id="KW-0963">Cytoplasm</keyword>
<keyword id="KW-0378">Hydrolase</keyword>
<keyword id="KW-0479">Metal-binding</keyword>
<keyword id="KW-0862">Zinc</keyword>
<organism>
    <name type="scientific">Bacillus anthracis (strain CDC 684 / NRRL 3495)</name>
    <dbReference type="NCBI Taxonomy" id="568206"/>
    <lineage>
        <taxon>Bacteria</taxon>
        <taxon>Bacillati</taxon>
        <taxon>Bacillota</taxon>
        <taxon>Bacilli</taxon>
        <taxon>Bacillales</taxon>
        <taxon>Bacillaceae</taxon>
        <taxon>Bacillus</taxon>
        <taxon>Bacillus cereus group</taxon>
    </lineage>
</organism>
<dbReference type="EC" id="3.-.-.-" evidence="1"/>
<dbReference type="EMBL" id="CP001215">
    <property type="protein sequence ID" value="ACP13335.1"/>
    <property type="molecule type" value="Genomic_DNA"/>
</dbReference>
<dbReference type="RefSeq" id="WP_000999075.1">
    <property type="nucleotide sequence ID" value="NC_012581.1"/>
</dbReference>
<dbReference type="SMR" id="C3LH21"/>
<dbReference type="KEGG" id="bah:BAMEG_1894"/>
<dbReference type="HOGENOM" id="CLU_105789_1_0_9"/>
<dbReference type="GO" id="GO:0005737">
    <property type="term" value="C:cytoplasm"/>
    <property type="evidence" value="ECO:0007669"/>
    <property type="project" value="UniProtKB-SubCell"/>
</dbReference>
<dbReference type="GO" id="GO:0016787">
    <property type="term" value="F:hydrolase activity"/>
    <property type="evidence" value="ECO:0007669"/>
    <property type="project" value="UniProtKB-UniRule"/>
</dbReference>
<dbReference type="GO" id="GO:0008270">
    <property type="term" value="F:zinc ion binding"/>
    <property type="evidence" value="ECO:0007669"/>
    <property type="project" value="UniProtKB-UniRule"/>
</dbReference>
<dbReference type="Gene3D" id="1.20.120.450">
    <property type="entry name" value="dinb family like domain"/>
    <property type="match status" value="1"/>
</dbReference>
<dbReference type="HAMAP" id="MF_01256">
    <property type="entry name" value="YfiT_hydrol"/>
    <property type="match status" value="1"/>
</dbReference>
<dbReference type="InterPro" id="IPR024775">
    <property type="entry name" value="DinB-like"/>
</dbReference>
<dbReference type="InterPro" id="IPR034660">
    <property type="entry name" value="DinB/YfiT-like"/>
</dbReference>
<dbReference type="InterPro" id="IPR023774">
    <property type="entry name" value="Put_metal_dep_hydrolase_YfiT"/>
</dbReference>
<dbReference type="NCBIfam" id="NF009807">
    <property type="entry name" value="PRK13291.1"/>
    <property type="match status" value="1"/>
</dbReference>
<dbReference type="Pfam" id="PF12867">
    <property type="entry name" value="DinB_2"/>
    <property type="match status" value="1"/>
</dbReference>
<dbReference type="SUPFAM" id="SSF109854">
    <property type="entry name" value="DinB/YfiT-like putative metalloenzymes"/>
    <property type="match status" value="1"/>
</dbReference>
<comment type="function">
    <text evidence="1">Possible metal-dependent hydrolase.</text>
</comment>
<comment type="cofactor">
    <cofactor evidence="1">
        <name>Zn(2+)</name>
        <dbReference type="ChEBI" id="CHEBI:29105"/>
    </cofactor>
    <text evidence="1">Binds 1 zinc ion per subunit.</text>
</comment>
<comment type="subunit">
    <text evidence="1">Homodimer.</text>
</comment>
<comment type="subcellular location">
    <subcellularLocation>
        <location evidence="1">Cytoplasm</location>
    </subcellularLocation>
</comment>
<comment type="similarity">
    <text evidence="1">Belongs to the metal hydrolase YfiT family.</text>
</comment>
<name>Y1894_BACAC</name>
<reference key="1">
    <citation type="submission" date="2008-10" db="EMBL/GenBank/DDBJ databases">
        <title>Genome sequence of Bacillus anthracis str. CDC 684.</title>
        <authorList>
            <person name="Dodson R.J."/>
            <person name="Munk A.C."/>
            <person name="Brettin T."/>
            <person name="Bruce D."/>
            <person name="Detter C."/>
            <person name="Tapia R."/>
            <person name="Han C."/>
            <person name="Sutton G."/>
            <person name="Sims D."/>
        </authorList>
    </citation>
    <scope>NUCLEOTIDE SEQUENCE [LARGE SCALE GENOMIC DNA]</scope>
    <source>
        <strain>CDC 684 / NRRL 3495</strain>
    </source>
</reference>
<evidence type="ECO:0000255" key="1">
    <source>
        <dbReference type="HAMAP-Rule" id="MF_01256"/>
    </source>
</evidence>